<comment type="catalytic activity">
    <reaction evidence="1">
        <text>CMP + ATP = CDP + ADP</text>
        <dbReference type="Rhea" id="RHEA:11600"/>
        <dbReference type="ChEBI" id="CHEBI:30616"/>
        <dbReference type="ChEBI" id="CHEBI:58069"/>
        <dbReference type="ChEBI" id="CHEBI:60377"/>
        <dbReference type="ChEBI" id="CHEBI:456216"/>
        <dbReference type="EC" id="2.7.4.25"/>
    </reaction>
</comment>
<comment type="catalytic activity">
    <reaction evidence="1">
        <text>dCMP + ATP = dCDP + ADP</text>
        <dbReference type="Rhea" id="RHEA:25094"/>
        <dbReference type="ChEBI" id="CHEBI:30616"/>
        <dbReference type="ChEBI" id="CHEBI:57566"/>
        <dbReference type="ChEBI" id="CHEBI:58593"/>
        <dbReference type="ChEBI" id="CHEBI:456216"/>
        <dbReference type="EC" id="2.7.4.25"/>
    </reaction>
</comment>
<comment type="subcellular location">
    <subcellularLocation>
        <location evidence="1">Cytoplasm</location>
    </subcellularLocation>
</comment>
<comment type="similarity">
    <text evidence="1">Belongs to the cytidylate kinase family. Type 1 subfamily.</text>
</comment>
<reference key="1">
    <citation type="journal article" date="2009" name="PLoS Genet.">
        <title>Organised genome dynamics in the Escherichia coli species results in highly diverse adaptive paths.</title>
        <authorList>
            <person name="Touchon M."/>
            <person name="Hoede C."/>
            <person name="Tenaillon O."/>
            <person name="Barbe V."/>
            <person name="Baeriswyl S."/>
            <person name="Bidet P."/>
            <person name="Bingen E."/>
            <person name="Bonacorsi S."/>
            <person name="Bouchier C."/>
            <person name="Bouvet O."/>
            <person name="Calteau A."/>
            <person name="Chiapello H."/>
            <person name="Clermont O."/>
            <person name="Cruveiller S."/>
            <person name="Danchin A."/>
            <person name="Diard M."/>
            <person name="Dossat C."/>
            <person name="Karoui M.E."/>
            <person name="Frapy E."/>
            <person name="Garry L."/>
            <person name="Ghigo J.M."/>
            <person name="Gilles A.M."/>
            <person name="Johnson J."/>
            <person name="Le Bouguenec C."/>
            <person name="Lescat M."/>
            <person name="Mangenot S."/>
            <person name="Martinez-Jehanne V."/>
            <person name="Matic I."/>
            <person name="Nassif X."/>
            <person name="Oztas S."/>
            <person name="Petit M.A."/>
            <person name="Pichon C."/>
            <person name="Rouy Z."/>
            <person name="Ruf C.S."/>
            <person name="Schneider D."/>
            <person name="Tourret J."/>
            <person name="Vacherie B."/>
            <person name="Vallenet D."/>
            <person name="Medigue C."/>
            <person name="Rocha E.P.C."/>
            <person name="Denamur E."/>
        </authorList>
    </citation>
    <scope>NUCLEOTIDE SEQUENCE [LARGE SCALE GENOMIC DNA]</scope>
    <source>
        <strain>55989 / EAEC</strain>
    </source>
</reference>
<sequence length="227" mass="24746">MTAIAPVITIDGPSGAGKGTLCKAMAEALQWHLLDSGAIYRVLALAALHHHVDVASEDALVPLASHLDVRFVSTNGNLEVILEGEDVSGEIRTQEVANAASQVAAFPRVREALLRRQRAFRELPGLIADGRDMGTVVFPDAPVKIFLDASSEERAHRRMLQLQEKGFSVNFERLLAEIKERDDRDRNRAVAPLVPAADALVLDSTTLSIEQVIEKALQYARQKLALA</sequence>
<accession>B7LDA2</accession>
<keyword id="KW-0067">ATP-binding</keyword>
<keyword id="KW-0963">Cytoplasm</keyword>
<keyword id="KW-0418">Kinase</keyword>
<keyword id="KW-0547">Nucleotide-binding</keyword>
<keyword id="KW-1185">Reference proteome</keyword>
<keyword id="KW-0808">Transferase</keyword>
<protein>
    <recommendedName>
        <fullName evidence="1">Cytidylate kinase</fullName>
        <shortName evidence="1">CK</shortName>
        <ecNumber evidence="1">2.7.4.25</ecNumber>
    </recommendedName>
    <alternativeName>
        <fullName evidence="1">Cytidine monophosphate kinase</fullName>
        <shortName evidence="1">CMP kinase</shortName>
    </alternativeName>
</protein>
<proteinExistence type="inferred from homology"/>
<evidence type="ECO:0000255" key="1">
    <source>
        <dbReference type="HAMAP-Rule" id="MF_00238"/>
    </source>
</evidence>
<name>KCY_ECO55</name>
<organism>
    <name type="scientific">Escherichia coli (strain 55989 / EAEC)</name>
    <dbReference type="NCBI Taxonomy" id="585055"/>
    <lineage>
        <taxon>Bacteria</taxon>
        <taxon>Pseudomonadati</taxon>
        <taxon>Pseudomonadota</taxon>
        <taxon>Gammaproteobacteria</taxon>
        <taxon>Enterobacterales</taxon>
        <taxon>Enterobacteriaceae</taxon>
        <taxon>Escherichia</taxon>
    </lineage>
</organism>
<feature type="chain" id="PRO_1000125286" description="Cytidylate kinase">
    <location>
        <begin position="1"/>
        <end position="227"/>
    </location>
</feature>
<feature type="binding site" evidence="1">
    <location>
        <begin position="12"/>
        <end position="20"/>
    </location>
    <ligand>
        <name>ATP</name>
        <dbReference type="ChEBI" id="CHEBI:30616"/>
    </ligand>
</feature>
<dbReference type="EC" id="2.7.4.25" evidence="1"/>
<dbReference type="EMBL" id="CU928145">
    <property type="protein sequence ID" value="CAU96819.1"/>
    <property type="molecule type" value="Genomic_DNA"/>
</dbReference>
<dbReference type="RefSeq" id="WP_000125016.1">
    <property type="nucleotide sequence ID" value="NZ_CP028304.1"/>
</dbReference>
<dbReference type="SMR" id="B7LDA2"/>
<dbReference type="GeneID" id="93776507"/>
<dbReference type="KEGG" id="eck:EC55989_0955"/>
<dbReference type="HOGENOM" id="CLU_079959_0_2_6"/>
<dbReference type="Proteomes" id="UP000000746">
    <property type="component" value="Chromosome"/>
</dbReference>
<dbReference type="GO" id="GO:0005829">
    <property type="term" value="C:cytosol"/>
    <property type="evidence" value="ECO:0007669"/>
    <property type="project" value="TreeGrafter"/>
</dbReference>
<dbReference type="GO" id="GO:0005524">
    <property type="term" value="F:ATP binding"/>
    <property type="evidence" value="ECO:0007669"/>
    <property type="project" value="UniProtKB-UniRule"/>
</dbReference>
<dbReference type="GO" id="GO:0036430">
    <property type="term" value="F:CMP kinase activity"/>
    <property type="evidence" value="ECO:0007669"/>
    <property type="project" value="RHEA"/>
</dbReference>
<dbReference type="GO" id="GO:0036431">
    <property type="term" value="F:dCMP kinase activity"/>
    <property type="evidence" value="ECO:0007669"/>
    <property type="project" value="RHEA"/>
</dbReference>
<dbReference type="GO" id="GO:0015949">
    <property type="term" value="P:nucleobase-containing small molecule interconversion"/>
    <property type="evidence" value="ECO:0007669"/>
    <property type="project" value="TreeGrafter"/>
</dbReference>
<dbReference type="GO" id="GO:0006220">
    <property type="term" value="P:pyrimidine nucleotide metabolic process"/>
    <property type="evidence" value="ECO:0007669"/>
    <property type="project" value="UniProtKB-UniRule"/>
</dbReference>
<dbReference type="CDD" id="cd02020">
    <property type="entry name" value="CMPK"/>
    <property type="match status" value="1"/>
</dbReference>
<dbReference type="FunFam" id="3.40.50.300:FF:000262">
    <property type="entry name" value="Cytidylate kinase"/>
    <property type="match status" value="1"/>
</dbReference>
<dbReference type="Gene3D" id="3.40.50.300">
    <property type="entry name" value="P-loop containing nucleotide triphosphate hydrolases"/>
    <property type="match status" value="1"/>
</dbReference>
<dbReference type="HAMAP" id="MF_00238">
    <property type="entry name" value="Cytidyl_kinase_type1"/>
    <property type="match status" value="1"/>
</dbReference>
<dbReference type="InterPro" id="IPR003136">
    <property type="entry name" value="Cytidylate_kin"/>
</dbReference>
<dbReference type="InterPro" id="IPR011994">
    <property type="entry name" value="Cytidylate_kinase_dom"/>
</dbReference>
<dbReference type="InterPro" id="IPR027417">
    <property type="entry name" value="P-loop_NTPase"/>
</dbReference>
<dbReference type="NCBIfam" id="TIGR00017">
    <property type="entry name" value="cmk"/>
    <property type="match status" value="1"/>
</dbReference>
<dbReference type="PANTHER" id="PTHR21299:SF2">
    <property type="entry name" value="CYTIDYLATE KINASE"/>
    <property type="match status" value="1"/>
</dbReference>
<dbReference type="PANTHER" id="PTHR21299">
    <property type="entry name" value="CYTIDYLATE KINASE/PANTOATE-BETA-ALANINE LIGASE"/>
    <property type="match status" value="1"/>
</dbReference>
<dbReference type="Pfam" id="PF02224">
    <property type="entry name" value="Cytidylate_kin"/>
    <property type="match status" value="1"/>
</dbReference>
<dbReference type="SUPFAM" id="SSF52540">
    <property type="entry name" value="P-loop containing nucleoside triphosphate hydrolases"/>
    <property type="match status" value="1"/>
</dbReference>
<gene>
    <name evidence="1" type="primary">cmk</name>
    <name type="ordered locus">EC55989_0955</name>
</gene>